<proteinExistence type="evidence at protein level"/>
<protein>
    <recommendedName>
        <fullName>Mini zinc finger protein 1</fullName>
        <shortName>AtMIF1</shortName>
    </recommendedName>
</protein>
<evidence type="ECO:0000255" key="1">
    <source>
        <dbReference type="PROSITE-ProRule" id="PRU00856"/>
    </source>
</evidence>
<evidence type="ECO:0000256" key="2">
    <source>
        <dbReference type="SAM" id="MobiDB-lite"/>
    </source>
</evidence>
<evidence type="ECO:0000269" key="3">
    <source>
    </source>
</evidence>
<evidence type="ECO:0000269" key="4">
    <source>
    </source>
</evidence>
<evidence type="ECO:0000269" key="5">
    <source>
    </source>
</evidence>
<evidence type="ECO:0000305" key="6"/>
<accession>Q9CA51</accession>
<accession>Q8LEN6</accession>
<dbReference type="EMBL" id="AC011765">
    <property type="protein sequence ID" value="AAG52375.1"/>
    <property type="molecule type" value="Genomic_DNA"/>
</dbReference>
<dbReference type="EMBL" id="CP002684">
    <property type="protein sequence ID" value="AEE35619.1"/>
    <property type="molecule type" value="Genomic_DNA"/>
</dbReference>
<dbReference type="EMBL" id="BT024806">
    <property type="protein sequence ID" value="ABD60689.1"/>
    <property type="molecule type" value="mRNA"/>
</dbReference>
<dbReference type="EMBL" id="AY085327">
    <property type="protein sequence ID" value="AAM62558.1"/>
    <property type="status" value="ALT_INIT"/>
    <property type="molecule type" value="mRNA"/>
</dbReference>
<dbReference type="PIR" id="G96775">
    <property type="entry name" value="G96775"/>
</dbReference>
<dbReference type="RefSeq" id="NP_565088.1">
    <property type="nucleotide sequence ID" value="NM_106124.2"/>
</dbReference>
<dbReference type="BioGRID" id="29024">
    <property type="interactions" value="2"/>
</dbReference>
<dbReference type="FunCoup" id="Q9CA51">
    <property type="interactions" value="2"/>
</dbReference>
<dbReference type="IntAct" id="Q9CA51">
    <property type="interactions" value="2"/>
</dbReference>
<dbReference type="STRING" id="3702.Q9CA51"/>
<dbReference type="PaxDb" id="3702-AT1G74660.1"/>
<dbReference type="ProteomicsDB" id="238706"/>
<dbReference type="EnsemblPlants" id="AT1G74660.1">
    <property type="protein sequence ID" value="AT1G74660.1"/>
    <property type="gene ID" value="AT1G74660"/>
</dbReference>
<dbReference type="GeneID" id="843805"/>
<dbReference type="Gramene" id="AT1G74660.1">
    <property type="protein sequence ID" value="AT1G74660.1"/>
    <property type="gene ID" value="AT1G74660"/>
</dbReference>
<dbReference type="KEGG" id="ath:AT1G74660"/>
<dbReference type="Araport" id="AT1G74660"/>
<dbReference type="TAIR" id="AT1G74660">
    <property type="gene designation" value="MIF1"/>
</dbReference>
<dbReference type="eggNOG" id="ENOG502S2AW">
    <property type="taxonomic scope" value="Eukaryota"/>
</dbReference>
<dbReference type="HOGENOM" id="CLU_123565_0_0_1"/>
<dbReference type="InParanoid" id="Q9CA51"/>
<dbReference type="OrthoDB" id="1090395at2759"/>
<dbReference type="PhylomeDB" id="Q9CA51"/>
<dbReference type="PRO" id="PR:Q9CA51"/>
<dbReference type="Proteomes" id="UP000006548">
    <property type="component" value="Chromosome 1"/>
</dbReference>
<dbReference type="ExpressionAtlas" id="Q9CA51">
    <property type="expression patterns" value="baseline and differential"/>
</dbReference>
<dbReference type="GO" id="GO:0005737">
    <property type="term" value="C:cytoplasm"/>
    <property type="evidence" value="ECO:0000314"/>
    <property type="project" value="UniProtKB"/>
</dbReference>
<dbReference type="GO" id="GO:0005634">
    <property type="term" value="C:nucleus"/>
    <property type="evidence" value="ECO:0000314"/>
    <property type="project" value="UniProtKB"/>
</dbReference>
<dbReference type="GO" id="GO:0003677">
    <property type="term" value="F:DNA binding"/>
    <property type="evidence" value="ECO:0000314"/>
    <property type="project" value="TAIR"/>
</dbReference>
<dbReference type="GO" id="GO:0042803">
    <property type="term" value="F:protein homodimerization activity"/>
    <property type="evidence" value="ECO:0000314"/>
    <property type="project" value="UniProtKB"/>
</dbReference>
<dbReference type="GO" id="GO:0000976">
    <property type="term" value="F:transcription cis-regulatory region binding"/>
    <property type="evidence" value="ECO:0000353"/>
    <property type="project" value="TAIR"/>
</dbReference>
<dbReference type="GO" id="GO:0008270">
    <property type="term" value="F:zinc ion binding"/>
    <property type="evidence" value="ECO:0007669"/>
    <property type="project" value="UniProtKB-KW"/>
</dbReference>
<dbReference type="GO" id="GO:0043392">
    <property type="term" value="P:negative regulation of DNA binding"/>
    <property type="evidence" value="ECO:0000314"/>
    <property type="project" value="TAIR"/>
</dbReference>
<dbReference type="GO" id="GO:0045892">
    <property type="term" value="P:negative regulation of DNA-templated transcription"/>
    <property type="evidence" value="ECO:0000314"/>
    <property type="project" value="TAIR"/>
</dbReference>
<dbReference type="GO" id="GO:0009640">
    <property type="term" value="P:photomorphogenesis"/>
    <property type="evidence" value="ECO:0000315"/>
    <property type="project" value="TAIR"/>
</dbReference>
<dbReference type="GO" id="GO:0048509">
    <property type="term" value="P:regulation of meristem development"/>
    <property type="evidence" value="ECO:0000315"/>
    <property type="project" value="TAIR"/>
</dbReference>
<dbReference type="GO" id="GO:0009737">
    <property type="term" value="P:response to abscisic acid"/>
    <property type="evidence" value="ECO:0000315"/>
    <property type="project" value="TAIR"/>
</dbReference>
<dbReference type="GO" id="GO:0009733">
    <property type="term" value="P:response to auxin"/>
    <property type="evidence" value="ECO:0000315"/>
    <property type="project" value="TAIR"/>
</dbReference>
<dbReference type="GO" id="GO:0009741">
    <property type="term" value="P:response to brassinosteroid"/>
    <property type="evidence" value="ECO:0000315"/>
    <property type="project" value="TAIR"/>
</dbReference>
<dbReference type="GO" id="GO:0009735">
    <property type="term" value="P:response to cytokinin"/>
    <property type="evidence" value="ECO:0000315"/>
    <property type="project" value="TAIR"/>
</dbReference>
<dbReference type="GO" id="GO:0009739">
    <property type="term" value="P:response to gibberellin"/>
    <property type="evidence" value="ECO:0000315"/>
    <property type="project" value="TAIR"/>
</dbReference>
<dbReference type="InterPro" id="IPR006456">
    <property type="entry name" value="ZF_HD_homeobox_Cys/His_dimer"/>
</dbReference>
<dbReference type="NCBIfam" id="TIGR01566">
    <property type="entry name" value="ZF_HD_prot_N"/>
    <property type="match status" value="1"/>
</dbReference>
<dbReference type="PANTHER" id="PTHR31948:SF65">
    <property type="entry name" value="MINI ZINC FINGER PROTEIN 1"/>
    <property type="match status" value="1"/>
</dbReference>
<dbReference type="PANTHER" id="PTHR31948">
    <property type="entry name" value="ZINC-FINGER HOMEODOMAIN PROTEIN 2"/>
    <property type="match status" value="1"/>
</dbReference>
<dbReference type="Pfam" id="PF04770">
    <property type="entry name" value="ZF-HD_dimer"/>
    <property type="match status" value="1"/>
</dbReference>
<dbReference type="PROSITE" id="PS51523">
    <property type="entry name" value="ZF_HD_DIMER"/>
    <property type="match status" value="1"/>
</dbReference>
<organism>
    <name type="scientific">Arabidopsis thaliana</name>
    <name type="common">Mouse-ear cress</name>
    <dbReference type="NCBI Taxonomy" id="3702"/>
    <lineage>
        <taxon>Eukaryota</taxon>
        <taxon>Viridiplantae</taxon>
        <taxon>Streptophyta</taxon>
        <taxon>Embryophyta</taxon>
        <taxon>Tracheophyta</taxon>
        <taxon>Spermatophyta</taxon>
        <taxon>Magnoliopsida</taxon>
        <taxon>eudicotyledons</taxon>
        <taxon>Gunneridae</taxon>
        <taxon>Pentapetalae</taxon>
        <taxon>rosids</taxon>
        <taxon>malvids</taxon>
        <taxon>Brassicales</taxon>
        <taxon>Brassicaceae</taxon>
        <taxon>Camelineae</taxon>
        <taxon>Arabidopsis</taxon>
    </lineage>
</organism>
<comment type="function">
    <text evidence="3 4 5">Inhibits zinc finger homeodomain (ZHD) transcription factors, such as ZHD5, by interacting with them to prevent both their nuclear localization and their DNA-binding properties. Involved in integrating signals from multiple hormones by preventing the expression of genes involved in gibberellic acid (GA), auxin and brassinosteroid signaling and by promoting the expression of abscisic acid (ABA)-responsive genes. Regulates several development aspects, including photomorphogenesis, apical dominance, longevity, flower morphology and fertility, as well as root and stem elongation. Promotes the formation of ectopic shoot meristems on leaf margins.</text>
</comment>
<comment type="subunit">
    <text evidence="4">Homo- and heterodimers. Interacts with ZHD1, ZHD5, ZHD6, ZHD7, ZHD8, ZHD10 and ZHD13.</text>
</comment>
<comment type="subcellular location">
    <subcellularLocation>
        <location evidence="4">Cytoplasm</location>
    </subcellularLocation>
</comment>
<comment type="tissue specificity">
    <text evidence="3">Mostly expressed in roots and stems, present in siliques and seedlings, and weakly observed in petioles, leaves and flowers.</text>
</comment>
<comment type="sequence caution" evidence="6">
    <conflict type="erroneous initiation">
        <sequence resource="EMBL-CDS" id="AAM62558"/>
    </conflict>
    <text>Truncated N-terminus.</text>
</comment>
<gene>
    <name type="primary">MIF1</name>
    <name type="ordered locus">At1g74660</name>
    <name type="ORF">F1M20.34</name>
</gene>
<name>MIF1_ARATH</name>
<sequence length="102" mass="11213">MMKKRQMVIKQRSRNSNTSSSWTTTSSSSSSSEISNVRYVECQKNHAANIGGYAVDGCREFMAAGVEGTVDALRCAACGCHRNFHRKEVDTEVVCEYSPPNA</sequence>
<keyword id="KW-0963">Cytoplasm</keyword>
<keyword id="KW-0217">Developmental protein</keyword>
<keyword id="KW-0479">Metal-binding</keyword>
<keyword id="KW-1185">Reference proteome</keyword>
<keyword id="KW-0804">Transcription</keyword>
<keyword id="KW-0805">Transcription regulation</keyword>
<keyword id="KW-0862">Zinc</keyword>
<keyword id="KW-0863">Zinc-finger</keyword>
<reference key="1">
    <citation type="journal article" date="2000" name="Nature">
        <title>Sequence and analysis of chromosome 1 of the plant Arabidopsis thaliana.</title>
        <authorList>
            <person name="Theologis A."/>
            <person name="Ecker J.R."/>
            <person name="Palm C.J."/>
            <person name="Federspiel N.A."/>
            <person name="Kaul S."/>
            <person name="White O."/>
            <person name="Alonso J."/>
            <person name="Altafi H."/>
            <person name="Araujo R."/>
            <person name="Bowman C.L."/>
            <person name="Brooks S.Y."/>
            <person name="Buehler E."/>
            <person name="Chan A."/>
            <person name="Chao Q."/>
            <person name="Chen H."/>
            <person name="Cheuk R.F."/>
            <person name="Chin C.W."/>
            <person name="Chung M.K."/>
            <person name="Conn L."/>
            <person name="Conway A.B."/>
            <person name="Conway A.R."/>
            <person name="Creasy T.H."/>
            <person name="Dewar K."/>
            <person name="Dunn P."/>
            <person name="Etgu P."/>
            <person name="Feldblyum T.V."/>
            <person name="Feng J.-D."/>
            <person name="Fong B."/>
            <person name="Fujii C.Y."/>
            <person name="Gill J.E."/>
            <person name="Goldsmith A.D."/>
            <person name="Haas B."/>
            <person name="Hansen N.F."/>
            <person name="Hughes B."/>
            <person name="Huizar L."/>
            <person name="Hunter J.L."/>
            <person name="Jenkins J."/>
            <person name="Johnson-Hopson C."/>
            <person name="Khan S."/>
            <person name="Khaykin E."/>
            <person name="Kim C.J."/>
            <person name="Koo H.L."/>
            <person name="Kremenetskaia I."/>
            <person name="Kurtz D.B."/>
            <person name="Kwan A."/>
            <person name="Lam B."/>
            <person name="Langin-Hooper S."/>
            <person name="Lee A."/>
            <person name="Lee J.M."/>
            <person name="Lenz C.A."/>
            <person name="Li J.H."/>
            <person name="Li Y.-P."/>
            <person name="Lin X."/>
            <person name="Liu S.X."/>
            <person name="Liu Z.A."/>
            <person name="Luros J.S."/>
            <person name="Maiti R."/>
            <person name="Marziali A."/>
            <person name="Militscher J."/>
            <person name="Miranda M."/>
            <person name="Nguyen M."/>
            <person name="Nierman W.C."/>
            <person name="Osborne B.I."/>
            <person name="Pai G."/>
            <person name="Peterson J."/>
            <person name="Pham P.K."/>
            <person name="Rizzo M."/>
            <person name="Rooney T."/>
            <person name="Rowley D."/>
            <person name="Sakano H."/>
            <person name="Salzberg S.L."/>
            <person name="Schwartz J.R."/>
            <person name="Shinn P."/>
            <person name="Southwick A.M."/>
            <person name="Sun H."/>
            <person name="Tallon L.J."/>
            <person name="Tambunga G."/>
            <person name="Toriumi M.J."/>
            <person name="Town C.D."/>
            <person name="Utterback T."/>
            <person name="Van Aken S."/>
            <person name="Vaysberg M."/>
            <person name="Vysotskaia V.S."/>
            <person name="Walker M."/>
            <person name="Wu D."/>
            <person name="Yu G."/>
            <person name="Fraser C.M."/>
            <person name="Venter J.C."/>
            <person name="Davis R.W."/>
        </authorList>
    </citation>
    <scope>NUCLEOTIDE SEQUENCE [LARGE SCALE GENOMIC DNA]</scope>
    <source>
        <strain>cv. Columbia</strain>
    </source>
</reference>
<reference key="2">
    <citation type="journal article" date="2017" name="Plant J.">
        <title>Araport11: a complete reannotation of the Arabidopsis thaliana reference genome.</title>
        <authorList>
            <person name="Cheng C.Y."/>
            <person name="Krishnakumar V."/>
            <person name="Chan A.P."/>
            <person name="Thibaud-Nissen F."/>
            <person name="Schobel S."/>
            <person name="Town C.D."/>
        </authorList>
    </citation>
    <scope>GENOME REANNOTATION</scope>
    <source>
        <strain>cv. Columbia</strain>
    </source>
</reference>
<reference key="3">
    <citation type="submission" date="2006-03" db="EMBL/GenBank/DDBJ databases">
        <title>Arabidopsis ORF clones.</title>
        <authorList>
            <person name="Kim C.J."/>
            <person name="Chen H."/>
            <person name="Shinn P."/>
            <person name="Ecker J.R."/>
        </authorList>
    </citation>
    <scope>NUCLEOTIDE SEQUENCE [LARGE SCALE MRNA]</scope>
    <source>
        <strain>cv. Columbia</strain>
    </source>
</reference>
<reference key="4">
    <citation type="submission" date="2002-03" db="EMBL/GenBank/DDBJ databases">
        <title>Full-length cDNA from Arabidopsis thaliana.</title>
        <authorList>
            <person name="Brover V.V."/>
            <person name="Troukhan M.E."/>
            <person name="Alexandrov N.A."/>
            <person name="Lu Y.-P."/>
            <person name="Flavell R.B."/>
            <person name="Feldmann K.A."/>
        </authorList>
    </citation>
    <scope>NUCLEOTIDE SEQUENCE [LARGE SCALE MRNA]</scope>
</reference>
<reference key="5">
    <citation type="journal article" date="2006" name="Plant J.">
        <title>Characterization of a novel putative zinc finger gene MIF1: involvement in multiple hormonal regulation of Arabidopsis development.</title>
        <authorList>
            <person name="Hu W."/>
            <person name="Ma H."/>
        </authorList>
    </citation>
    <scope>FUNCTION</scope>
    <scope>TISSUE SPECIFICITY</scope>
</reference>
<reference key="6">
    <citation type="journal article" date="2008" name="J. Integr. Plant Biol.">
        <title>Phylogenetic analysis of the plant-specific zinc finger-homeobox and mini zinc finger gene families.</title>
        <authorList>
            <person name="Hu W."/>
            <person name="dePamphilis C.W."/>
            <person name="Ma H."/>
        </authorList>
    </citation>
    <scope>GENE FAMILY</scope>
    <scope>NOMENCLATURE</scope>
</reference>
<reference key="7">
    <citation type="journal article" date="2011" name="J. Biol. Chem.">
        <title>Nuclear import and DNA binding of the ZHD5 transcription factor is modulated by a competitive peptide inhibitor in Arabidopsis.</title>
        <authorList>
            <person name="Hong S.-Y."/>
            <person name="Kim O.-K."/>
            <person name="Kim S.-G."/>
            <person name="Yang M.-S."/>
            <person name="Park C.-M."/>
        </authorList>
    </citation>
    <scope>FUNCTION</scope>
    <scope>SUBCELLULAR LOCATION</scope>
    <scope>SUBUNIT</scope>
    <scope>INTERACTION WITH ZHD1; ZHD5; ZHD6; ZHD7; ZHD8; ZHD10 AND ZHD13</scope>
    <scope>GENE FAMILY</scope>
    <scope>NOMENCLATURE</scope>
    <source>
        <strain>cv. Columbia</strain>
    </source>
</reference>
<reference key="8">
    <citation type="journal article" date="2011" name="Plant Mol. Biol.">
        <title>Ectopic expression of the Arabidopsis MINI ZINC FINGER1 and MIF3 genes induces shoot meristems on leaf margins.</title>
        <authorList>
            <person name="Hu W."/>
            <person name="Feng B."/>
            <person name="Ma H."/>
        </authorList>
    </citation>
    <scope>FUNCTION</scope>
    <source>
        <strain>cv. Columbia</strain>
    </source>
</reference>
<feature type="chain" id="PRO_0000426014" description="Mini zinc finger protein 1">
    <location>
        <begin position="1"/>
        <end position="102"/>
    </location>
</feature>
<feature type="zinc finger region" description="ZF-HD dimerization-type; degenerate" evidence="1">
    <location>
        <begin position="39"/>
        <end position="88"/>
    </location>
</feature>
<feature type="region of interest" description="Disordered" evidence="2">
    <location>
        <begin position="1"/>
        <end position="34"/>
    </location>
</feature>
<feature type="compositionally biased region" description="Basic residues" evidence="2">
    <location>
        <begin position="1"/>
        <end position="13"/>
    </location>
</feature>
<feature type="compositionally biased region" description="Low complexity" evidence="2">
    <location>
        <begin position="14"/>
        <end position="32"/>
    </location>
</feature>